<reference key="1">
    <citation type="journal article" date="2003" name="Gene">
        <title>Identification and characterization of a novel gene disrupted by a pericentric inversion inv(4)(p13.1q21.1) in a family with cleft lip.</title>
        <authorList>
            <person name="Beiraghi S."/>
            <person name="Zhou M."/>
            <person name="Talmadge C.B."/>
            <person name="Went-Sumegi N."/>
            <person name="Davis J.R."/>
            <person name="Huang D."/>
            <person name="Saal H."/>
            <person name="Seemayer T.A."/>
            <person name="Sumegi J."/>
        </authorList>
    </citation>
    <scope>NUCLEOTIDE SEQUENCE [MRNA] (ISOFORM 1)</scope>
    <scope>TISSUE SPECIFICITY</scope>
    <source>
        <tissue>Fetal brain</tissue>
    </source>
</reference>
<reference key="2">
    <citation type="journal article" date="2004" name="Nat. Genet.">
        <title>Complete sequencing and characterization of 21,243 full-length human cDNAs.</title>
        <authorList>
            <person name="Ota T."/>
            <person name="Suzuki Y."/>
            <person name="Nishikawa T."/>
            <person name="Otsuki T."/>
            <person name="Sugiyama T."/>
            <person name="Irie R."/>
            <person name="Wakamatsu A."/>
            <person name="Hayashi K."/>
            <person name="Sato H."/>
            <person name="Nagai K."/>
            <person name="Kimura K."/>
            <person name="Makita H."/>
            <person name="Sekine M."/>
            <person name="Obayashi M."/>
            <person name="Nishi T."/>
            <person name="Shibahara T."/>
            <person name="Tanaka T."/>
            <person name="Ishii S."/>
            <person name="Yamamoto J."/>
            <person name="Saito K."/>
            <person name="Kawai Y."/>
            <person name="Isono Y."/>
            <person name="Nakamura Y."/>
            <person name="Nagahari K."/>
            <person name="Murakami K."/>
            <person name="Yasuda T."/>
            <person name="Iwayanagi T."/>
            <person name="Wagatsuma M."/>
            <person name="Shiratori A."/>
            <person name="Sudo H."/>
            <person name="Hosoiri T."/>
            <person name="Kaku Y."/>
            <person name="Kodaira H."/>
            <person name="Kondo H."/>
            <person name="Sugawara M."/>
            <person name="Takahashi M."/>
            <person name="Kanda K."/>
            <person name="Yokoi T."/>
            <person name="Furuya T."/>
            <person name="Kikkawa E."/>
            <person name="Omura Y."/>
            <person name="Abe K."/>
            <person name="Kamihara K."/>
            <person name="Katsuta N."/>
            <person name="Sato K."/>
            <person name="Tanikawa M."/>
            <person name="Yamazaki M."/>
            <person name="Ninomiya K."/>
            <person name="Ishibashi T."/>
            <person name="Yamashita H."/>
            <person name="Murakawa K."/>
            <person name="Fujimori K."/>
            <person name="Tanai H."/>
            <person name="Kimata M."/>
            <person name="Watanabe M."/>
            <person name="Hiraoka S."/>
            <person name="Chiba Y."/>
            <person name="Ishida S."/>
            <person name="Ono Y."/>
            <person name="Takiguchi S."/>
            <person name="Watanabe S."/>
            <person name="Yosida M."/>
            <person name="Hotuta T."/>
            <person name="Kusano J."/>
            <person name="Kanehori K."/>
            <person name="Takahashi-Fujii A."/>
            <person name="Hara H."/>
            <person name="Tanase T.-O."/>
            <person name="Nomura Y."/>
            <person name="Togiya S."/>
            <person name="Komai F."/>
            <person name="Hara R."/>
            <person name="Takeuchi K."/>
            <person name="Arita M."/>
            <person name="Imose N."/>
            <person name="Musashino K."/>
            <person name="Yuuki H."/>
            <person name="Oshima A."/>
            <person name="Sasaki N."/>
            <person name="Aotsuka S."/>
            <person name="Yoshikawa Y."/>
            <person name="Matsunawa H."/>
            <person name="Ichihara T."/>
            <person name="Shiohata N."/>
            <person name="Sano S."/>
            <person name="Moriya S."/>
            <person name="Momiyama H."/>
            <person name="Satoh N."/>
            <person name="Takami S."/>
            <person name="Terashima Y."/>
            <person name="Suzuki O."/>
            <person name="Nakagawa S."/>
            <person name="Senoh A."/>
            <person name="Mizoguchi H."/>
            <person name="Goto Y."/>
            <person name="Shimizu F."/>
            <person name="Wakebe H."/>
            <person name="Hishigaki H."/>
            <person name="Watanabe T."/>
            <person name="Sugiyama A."/>
            <person name="Takemoto M."/>
            <person name="Kawakami B."/>
            <person name="Yamazaki M."/>
            <person name="Watanabe K."/>
            <person name="Kumagai A."/>
            <person name="Itakura S."/>
            <person name="Fukuzumi Y."/>
            <person name="Fujimori Y."/>
            <person name="Komiyama M."/>
            <person name="Tashiro H."/>
            <person name="Tanigami A."/>
            <person name="Fujiwara T."/>
            <person name="Ono T."/>
            <person name="Yamada K."/>
            <person name="Fujii Y."/>
            <person name="Ozaki K."/>
            <person name="Hirao M."/>
            <person name="Ohmori Y."/>
            <person name="Kawabata A."/>
            <person name="Hikiji T."/>
            <person name="Kobatake N."/>
            <person name="Inagaki H."/>
            <person name="Ikema Y."/>
            <person name="Okamoto S."/>
            <person name="Okitani R."/>
            <person name="Kawakami T."/>
            <person name="Noguchi S."/>
            <person name="Itoh T."/>
            <person name="Shigeta K."/>
            <person name="Senba T."/>
            <person name="Matsumura K."/>
            <person name="Nakajima Y."/>
            <person name="Mizuno T."/>
            <person name="Morinaga M."/>
            <person name="Sasaki M."/>
            <person name="Togashi T."/>
            <person name="Oyama M."/>
            <person name="Hata H."/>
            <person name="Watanabe M."/>
            <person name="Komatsu T."/>
            <person name="Mizushima-Sugano J."/>
            <person name="Satoh T."/>
            <person name="Shirai Y."/>
            <person name="Takahashi Y."/>
            <person name="Nakagawa K."/>
            <person name="Okumura K."/>
            <person name="Nagase T."/>
            <person name="Nomura N."/>
            <person name="Kikuchi H."/>
            <person name="Masuho Y."/>
            <person name="Yamashita R."/>
            <person name="Nakai K."/>
            <person name="Yada T."/>
            <person name="Nakamura Y."/>
            <person name="Ohara O."/>
            <person name="Isogai T."/>
            <person name="Sugano S."/>
        </authorList>
    </citation>
    <scope>NUCLEOTIDE SEQUENCE [LARGE SCALE MRNA] (ISOFORM 2)</scope>
    <source>
        <tissue>Endothelial cell</tissue>
    </source>
</reference>
<reference key="3">
    <citation type="journal article" date="2005" name="Nature">
        <title>Generation and annotation of the DNA sequences of human chromosomes 2 and 4.</title>
        <authorList>
            <person name="Hillier L.W."/>
            <person name="Graves T.A."/>
            <person name="Fulton R.S."/>
            <person name="Fulton L.A."/>
            <person name="Pepin K.H."/>
            <person name="Minx P."/>
            <person name="Wagner-McPherson C."/>
            <person name="Layman D."/>
            <person name="Wylie K."/>
            <person name="Sekhon M."/>
            <person name="Becker M.C."/>
            <person name="Fewell G.A."/>
            <person name="Delehaunty K.D."/>
            <person name="Miner T.L."/>
            <person name="Nash W.E."/>
            <person name="Kremitzki C."/>
            <person name="Oddy L."/>
            <person name="Du H."/>
            <person name="Sun H."/>
            <person name="Bradshaw-Cordum H."/>
            <person name="Ali J."/>
            <person name="Carter J."/>
            <person name="Cordes M."/>
            <person name="Harris A."/>
            <person name="Isak A."/>
            <person name="van Brunt A."/>
            <person name="Nguyen C."/>
            <person name="Du F."/>
            <person name="Courtney L."/>
            <person name="Kalicki J."/>
            <person name="Ozersky P."/>
            <person name="Abbott S."/>
            <person name="Armstrong J."/>
            <person name="Belter E.A."/>
            <person name="Caruso L."/>
            <person name="Cedroni M."/>
            <person name="Cotton M."/>
            <person name="Davidson T."/>
            <person name="Desai A."/>
            <person name="Elliott G."/>
            <person name="Erb T."/>
            <person name="Fronick C."/>
            <person name="Gaige T."/>
            <person name="Haakenson W."/>
            <person name="Haglund K."/>
            <person name="Holmes A."/>
            <person name="Harkins R."/>
            <person name="Kim K."/>
            <person name="Kruchowski S.S."/>
            <person name="Strong C.M."/>
            <person name="Grewal N."/>
            <person name="Goyea E."/>
            <person name="Hou S."/>
            <person name="Levy A."/>
            <person name="Martinka S."/>
            <person name="Mead K."/>
            <person name="McLellan M.D."/>
            <person name="Meyer R."/>
            <person name="Randall-Maher J."/>
            <person name="Tomlinson C."/>
            <person name="Dauphin-Kohlberg S."/>
            <person name="Kozlowicz-Reilly A."/>
            <person name="Shah N."/>
            <person name="Swearengen-Shahid S."/>
            <person name="Snider J."/>
            <person name="Strong J.T."/>
            <person name="Thompson J."/>
            <person name="Yoakum M."/>
            <person name="Leonard S."/>
            <person name="Pearman C."/>
            <person name="Trani L."/>
            <person name="Radionenko M."/>
            <person name="Waligorski J.E."/>
            <person name="Wang C."/>
            <person name="Rock S.M."/>
            <person name="Tin-Wollam A.-M."/>
            <person name="Maupin R."/>
            <person name="Latreille P."/>
            <person name="Wendl M.C."/>
            <person name="Yang S.-P."/>
            <person name="Pohl C."/>
            <person name="Wallis J.W."/>
            <person name="Spieth J."/>
            <person name="Bieri T.A."/>
            <person name="Berkowicz N."/>
            <person name="Nelson J.O."/>
            <person name="Osborne J."/>
            <person name="Ding L."/>
            <person name="Meyer R."/>
            <person name="Sabo A."/>
            <person name="Shotland Y."/>
            <person name="Sinha P."/>
            <person name="Wohldmann P.E."/>
            <person name="Cook L.L."/>
            <person name="Hickenbotham M.T."/>
            <person name="Eldred J."/>
            <person name="Williams D."/>
            <person name="Jones T.A."/>
            <person name="She X."/>
            <person name="Ciccarelli F.D."/>
            <person name="Izaurralde E."/>
            <person name="Taylor J."/>
            <person name="Schmutz J."/>
            <person name="Myers R.M."/>
            <person name="Cox D.R."/>
            <person name="Huang X."/>
            <person name="McPherson J.D."/>
            <person name="Mardis E.R."/>
            <person name="Clifton S.W."/>
            <person name="Warren W.C."/>
            <person name="Chinwalla A.T."/>
            <person name="Eddy S.R."/>
            <person name="Marra M.A."/>
            <person name="Ovcharenko I."/>
            <person name="Furey T.S."/>
            <person name="Miller W."/>
            <person name="Eichler E.E."/>
            <person name="Bork P."/>
            <person name="Suyama M."/>
            <person name="Torrents D."/>
            <person name="Waterston R.H."/>
            <person name="Wilson R.K."/>
        </authorList>
    </citation>
    <scope>NUCLEOTIDE SEQUENCE [LARGE SCALE GENOMIC DNA]</scope>
</reference>
<reference key="4">
    <citation type="submission" date="2005-07" db="EMBL/GenBank/DDBJ databases">
        <authorList>
            <person name="Mural R.J."/>
            <person name="Istrail S."/>
            <person name="Sutton G.G."/>
            <person name="Florea L."/>
            <person name="Halpern A.L."/>
            <person name="Mobarry C.M."/>
            <person name="Lippert R."/>
            <person name="Walenz B."/>
            <person name="Shatkay H."/>
            <person name="Dew I."/>
            <person name="Miller J.R."/>
            <person name="Flanigan M.J."/>
            <person name="Edwards N.J."/>
            <person name="Bolanos R."/>
            <person name="Fasulo D."/>
            <person name="Halldorsson B.V."/>
            <person name="Hannenhalli S."/>
            <person name="Turner R."/>
            <person name="Yooseph S."/>
            <person name="Lu F."/>
            <person name="Nusskern D.R."/>
            <person name="Shue B.C."/>
            <person name="Zheng X.H."/>
            <person name="Zhong F."/>
            <person name="Delcher A.L."/>
            <person name="Huson D.H."/>
            <person name="Kravitz S.A."/>
            <person name="Mouchard L."/>
            <person name="Reinert K."/>
            <person name="Remington K.A."/>
            <person name="Clark A.G."/>
            <person name="Waterman M.S."/>
            <person name="Eichler E.E."/>
            <person name="Adams M.D."/>
            <person name="Hunkapiller M.W."/>
            <person name="Myers E.W."/>
            <person name="Venter J.C."/>
        </authorList>
    </citation>
    <scope>NUCLEOTIDE SEQUENCE [LARGE SCALE GENOMIC DNA]</scope>
</reference>
<reference key="5">
    <citation type="journal article" date="2004" name="Genome Res.">
        <title>The status, quality, and expansion of the NIH full-length cDNA project: the Mammalian Gene Collection (MGC).</title>
        <authorList>
            <consortium name="The MGC Project Team"/>
        </authorList>
    </citation>
    <scope>NUCLEOTIDE SEQUENCE [LARGE SCALE MRNA] (ISOFORM 1)</scope>
    <source>
        <tissue>Brain</tissue>
    </source>
</reference>
<reference key="6">
    <citation type="journal article" date="2007" name="BMC Genomics">
        <title>The full-ORF clone resource of the German cDNA consortium.</title>
        <authorList>
            <person name="Bechtel S."/>
            <person name="Rosenfelder H."/>
            <person name="Duda A."/>
            <person name="Schmidt C.P."/>
            <person name="Ernst U."/>
            <person name="Wellenreuther R."/>
            <person name="Mehrle A."/>
            <person name="Schuster C."/>
            <person name="Bahr A."/>
            <person name="Bloecker H."/>
            <person name="Heubner D."/>
            <person name="Hoerlein A."/>
            <person name="Michel G."/>
            <person name="Wedler H."/>
            <person name="Koehrer K."/>
            <person name="Ottenwaelder B."/>
            <person name="Poustka A."/>
            <person name="Wiemann S."/>
            <person name="Schupp I."/>
        </authorList>
    </citation>
    <scope>NUCLEOTIDE SEQUENCE [LARGE SCALE MRNA] OF 171-330</scope>
    <source>
        <tissue>Brain</tissue>
    </source>
</reference>
<reference key="7">
    <citation type="journal article" date="2005" name="Biochem. Biophys. Res. Commun.">
        <title>Characterization of HSCD5, a novel human stearoyl-CoA desaturase unique to primates.</title>
        <authorList>
            <person name="Wang J."/>
            <person name="Yu L."/>
            <person name="Schmidt R.E."/>
            <person name="Su C."/>
            <person name="Huang X."/>
            <person name="Gould K."/>
            <person name="Cao G."/>
        </authorList>
    </citation>
    <scope>FUNCTION</scope>
    <scope>CATALYTIC ACTIVITY</scope>
    <scope>SUBCELLULAR LOCATION</scope>
    <scope>TISSUE SPECIFICITY</scope>
</reference>
<reference key="8">
    <citation type="journal article" date="2005" name="Biochem. J.">
        <title>Characterization of human SCD2, an oligomeric desaturase with improved stability and enzyme activity by cross-linking in intact cells.</title>
        <authorList>
            <person name="Zhang S."/>
            <person name="Yang Y."/>
            <person name="Shi Y."/>
        </authorList>
    </citation>
    <scope>FUNCTION</scope>
    <scope>CATALYTIC ACTIVITY</scope>
    <scope>TISSUE SPECIFICITY</scope>
    <scope>SUBUNIT</scope>
</reference>
<reference key="9">
    <citation type="journal article" date="2012" name="PLoS ONE">
        <title>StearoylCoA desaturase-5: a novel regulator of neuronal cell proliferation and differentiation.</title>
        <authorList>
            <person name="Sinner D.I."/>
            <person name="Kim G.J."/>
            <person name="Henderson G.C."/>
            <person name="Igal R.A."/>
        </authorList>
    </citation>
    <scope>CATALYTIC ACTIVITY</scope>
    <scope>FUNCTION</scope>
    <scope>TISSUE SPECIFICITY</scope>
    <scope>SUBCELLULAR LOCATION</scope>
</reference>
<reference key="10">
    <citation type="journal article" date="2012" name="Proc. Natl. Acad. Sci. U.S.A.">
        <title>N-terminal acetylome analyses and functional insights of the N-terminal acetyltransferase NatB.</title>
        <authorList>
            <person name="Van Damme P."/>
            <person name="Lasa M."/>
            <person name="Polevoda B."/>
            <person name="Gazquez C."/>
            <person name="Elosegui-Artola A."/>
            <person name="Kim D.S."/>
            <person name="De Juan-Pardo E."/>
            <person name="Demeyer K."/>
            <person name="Hole K."/>
            <person name="Larrea E."/>
            <person name="Timmerman E."/>
            <person name="Prieto J."/>
            <person name="Arnesen T."/>
            <person name="Sherman F."/>
            <person name="Gevaert K."/>
            <person name="Aldabe R."/>
        </authorList>
    </citation>
    <scope>IDENTIFICATION BY MASS SPECTROMETRY [LARGE SCALE ANALYSIS]</scope>
</reference>
<reference key="11">
    <citation type="journal article" date="2020" name="Eur. J. Med. Genet.">
        <title>Whole exome sequencing identifies SCD5 as a novel causative gene for autosomal dominant nonsyndromic deafness.</title>
        <authorList>
            <person name="Lu X."/>
            <person name="Zhang Y."/>
            <person name="Chen L."/>
            <person name="Wang Q."/>
            <person name="Zeng Z."/>
            <person name="Dong C."/>
            <person name="Qi Y."/>
            <person name="Liu Y."/>
        </authorList>
    </citation>
    <scope>TISSUE SPECIFICITY</scope>
    <scope>INVOLVEMENT IN DFNA79</scope>
    <scope>VARIANT DFNA79 SER-209</scope>
</reference>
<keyword id="KW-0025">Alternative splicing</keyword>
<keyword id="KW-0209">Deafness</keyword>
<keyword id="KW-0256">Endoplasmic reticulum</keyword>
<keyword id="KW-0275">Fatty acid biosynthesis</keyword>
<keyword id="KW-0276">Fatty acid metabolism</keyword>
<keyword id="KW-0408">Iron</keyword>
<keyword id="KW-0444">Lipid biosynthesis</keyword>
<keyword id="KW-0443">Lipid metabolism</keyword>
<keyword id="KW-0472">Membrane</keyword>
<keyword id="KW-0479">Metal-binding</keyword>
<keyword id="KW-1010">Non-syndromic deafness</keyword>
<keyword id="KW-0560">Oxidoreductase</keyword>
<keyword id="KW-1267">Proteomics identification</keyword>
<keyword id="KW-1185">Reference proteome</keyword>
<keyword id="KW-0812">Transmembrane</keyword>
<keyword id="KW-1133">Transmembrane helix</keyword>
<dbReference type="EC" id="1.14.19.1" evidence="5 6 7"/>
<dbReference type="EMBL" id="AF389338">
    <property type="protein sequence ID" value="AAP31443.1"/>
    <property type="molecule type" value="mRNA"/>
</dbReference>
<dbReference type="EMBL" id="AK024685">
    <property type="protein sequence ID" value="BAB14961.1"/>
    <property type="molecule type" value="mRNA"/>
</dbReference>
<dbReference type="EMBL" id="AC073413">
    <property type="protein sequence ID" value="AAY40977.1"/>
    <property type="molecule type" value="Genomic_DNA"/>
</dbReference>
<dbReference type="EMBL" id="CH471057">
    <property type="protein sequence ID" value="EAX05903.1"/>
    <property type="molecule type" value="Genomic_DNA"/>
</dbReference>
<dbReference type="EMBL" id="CH471057">
    <property type="protein sequence ID" value="EAX05904.1"/>
    <property type="molecule type" value="Genomic_DNA"/>
</dbReference>
<dbReference type="EMBL" id="BC137429">
    <property type="protein sequence ID" value="AAI37430.1"/>
    <property type="molecule type" value="mRNA"/>
</dbReference>
<dbReference type="EMBL" id="BC137432">
    <property type="protein sequence ID" value="AAI37433.1"/>
    <property type="molecule type" value="mRNA"/>
</dbReference>
<dbReference type="EMBL" id="AL831891">
    <property type="protein sequence ID" value="CAD38567.1"/>
    <property type="molecule type" value="mRNA"/>
</dbReference>
<dbReference type="CCDS" id="CCDS34024.1">
    <molecule id="Q86SK9-1"/>
</dbReference>
<dbReference type="CCDS" id="CCDS3595.1">
    <molecule id="Q86SK9-2"/>
</dbReference>
<dbReference type="RefSeq" id="NP_001032671.2">
    <molecule id="Q86SK9-1"/>
    <property type="nucleotide sequence ID" value="NM_001037582.3"/>
</dbReference>
<dbReference type="RefSeq" id="NP_079182.2">
    <molecule id="Q86SK9-2"/>
    <property type="nucleotide sequence ID" value="NM_024906.3"/>
</dbReference>
<dbReference type="SMR" id="Q86SK9"/>
<dbReference type="BioGRID" id="123034">
    <property type="interactions" value="71"/>
</dbReference>
<dbReference type="FunCoup" id="Q86SK9">
    <property type="interactions" value="583"/>
</dbReference>
<dbReference type="IntAct" id="Q86SK9">
    <property type="interactions" value="13"/>
</dbReference>
<dbReference type="STRING" id="9606.ENSP00000316329"/>
<dbReference type="BindingDB" id="Q86SK9"/>
<dbReference type="ChEMBL" id="CHEMBL1275210"/>
<dbReference type="SwissLipids" id="SLP:000001074"/>
<dbReference type="GlyGen" id="Q86SK9">
    <property type="glycosylation" value="1 site"/>
</dbReference>
<dbReference type="iPTMnet" id="Q86SK9"/>
<dbReference type="PhosphoSitePlus" id="Q86SK9"/>
<dbReference type="BioMuta" id="SCD5"/>
<dbReference type="DMDM" id="162416247"/>
<dbReference type="jPOST" id="Q86SK9"/>
<dbReference type="MassIVE" id="Q86SK9"/>
<dbReference type="PaxDb" id="9606-ENSP00000316329"/>
<dbReference type="PeptideAtlas" id="Q86SK9"/>
<dbReference type="ProteomicsDB" id="69599">
    <molecule id="Q86SK9-1"/>
</dbReference>
<dbReference type="ProteomicsDB" id="69600">
    <molecule id="Q86SK9-2"/>
</dbReference>
<dbReference type="Pumba" id="Q86SK9"/>
<dbReference type="Antibodypedia" id="51995">
    <property type="antibodies" value="94 antibodies from 16 providers"/>
</dbReference>
<dbReference type="DNASU" id="79966"/>
<dbReference type="Ensembl" id="ENST00000273908.4">
    <molecule id="Q86SK9-2"/>
    <property type="protein sequence ID" value="ENSP00000273908.4"/>
    <property type="gene ID" value="ENSG00000145284.12"/>
</dbReference>
<dbReference type="Ensembl" id="ENST00000319540.9">
    <molecule id="Q86SK9-1"/>
    <property type="protein sequence ID" value="ENSP00000316329.4"/>
    <property type="gene ID" value="ENSG00000145284.12"/>
</dbReference>
<dbReference type="GeneID" id="79966"/>
<dbReference type="KEGG" id="hsa:79966"/>
<dbReference type="MANE-Select" id="ENST00000319540.9">
    <property type="protein sequence ID" value="ENSP00000316329.4"/>
    <property type="RefSeq nucleotide sequence ID" value="NM_001037582.3"/>
    <property type="RefSeq protein sequence ID" value="NP_001032671.2"/>
</dbReference>
<dbReference type="UCSC" id="uc003hna.3">
    <molecule id="Q86SK9-1"/>
    <property type="organism name" value="human"/>
</dbReference>
<dbReference type="AGR" id="HGNC:21088"/>
<dbReference type="CTD" id="79966"/>
<dbReference type="DisGeNET" id="79966"/>
<dbReference type="GeneCards" id="SCD5"/>
<dbReference type="HGNC" id="HGNC:21088">
    <property type="gene designation" value="SCD5"/>
</dbReference>
<dbReference type="HPA" id="ENSG00000145284">
    <property type="expression patterns" value="Tissue enhanced (adrenal gland, brain)"/>
</dbReference>
<dbReference type="MalaCards" id="SCD5"/>
<dbReference type="MIM" id="608370">
    <property type="type" value="gene"/>
</dbReference>
<dbReference type="MIM" id="619086">
    <property type="type" value="phenotype"/>
</dbReference>
<dbReference type="neXtProt" id="NX_Q86SK9"/>
<dbReference type="OpenTargets" id="ENSG00000145284"/>
<dbReference type="PharmGKB" id="PA134934692"/>
<dbReference type="VEuPathDB" id="HostDB:ENSG00000145284"/>
<dbReference type="eggNOG" id="KOG1600">
    <property type="taxonomic scope" value="Eukaryota"/>
</dbReference>
<dbReference type="GeneTree" id="ENSGT00940000162090"/>
<dbReference type="HOGENOM" id="CLU_027359_0_0_1"/>
<dbReference type="InParanoid" id="Q86SK9"/>
<dbReference type="OMA" id="CQHGPID"/>
<dbReference type="OrthoDB" id="10260134at2759"/>
<dbReference type="PAN-GO" id="Q86SK9">
    <property type="GO annotations" value="5 GO annotations based on evolutionary models"/>
</dbReference>
<dbReference type="PhylomeDB" id="Q86SK9"/>
<dbReference type="TreeFam" id="TF313251"/>
<dbReference type="BRENDA" id="1.14.19.1">
    <property type="organism ID" value="2681"/>
</dbReference>
<dbReference type="PathwayCommons" id="Q86SK9"/>
<dbReference type="Reactome" id="R-HSA-75105">
    <property type="pathway name" value="Fatty acyl-CoA biosynthesis"/>
</dbReference>
<dbReference type="Reactome" id="R-HSA-9619665">
    <property type="pathway name" value="EGR2 and SOX10-mediated initiation of Schwann cell myelination"/>
</dbReference>
<dbReference type="Reactome" id="R-HSA-9841922">
    <property type="pathway name" value="MLL4 and MLL3 complexes regulate expression of PPARG target genes in adipogenesis and hepatic steatosis"/>
</dbReference>
<dbReference type="SignaLink" id="Q86SK9"/>
<dbReference type="BioGRID-ORCS" id="79966">
    <property type="hits" value="9 hits in 1155 CRISPR screens"/>
</dbReference>
<dbReference type="CD-CODE" id="FB4E32DD">
    <property type="entry name" value="Presynaptic clusters and postsynaptic densities"/>
</dbReference>
<dbReference type="ChiTaRS" id="SCD5">
    <property type="organism name" value="human"/>
</dbReference>
<dbReference type="GenomeRNAi" id="79966"/>
<dbReference type="Pharos" id="Q86SK9">
    <property type="development level" value="Tchem"/>
</dbReference>
<dbReference type="PRO" id="PR:Q86SK9"/>
<dbReference type="Proteomes" id="UP000005640">
    <property type="component" value="Chromosome 4"/>
</dbReference>
<dbReference type="RNAct" id="Q86SK9">
    <property type="molecule type" value="protein"/>
</dbReference>
<dbReference type="Bgee" id="ENSG00000145284">
    <property type="expression patterns" value="Expressed in lateral globus pallidus and 195 other cell types or tissues"/>
</dbReference>
<dbReference type="GO" id="GO:0005789">
    <property type="term" value="C:endoplasmic reticulum membrane"/>
    <property type="evidence" value="ECO:0000314"/>
    <property type="project" value="UniProtKB"/>
</dbReference>
<dbReference type="GO" id="GO:0005506">
    <property type="term" value="F:iron ion binding"/>
    <property type="evidence" value="ECO:0000318"/>
    <property type="project" value="GO_Central"/>
</dbReference>
<dbReference type="GO" id="GO:0016491">
    <property type="term" value="F:oxidoreductase activity"/>
    <property type="evidence" value="ECO:0000314"/>
    <property type="project" value="UniProtKB"/>
</dbReference>
<dbReference type="GO" id="GO:0004768">
    <property type="term" value="F:stearoyl-CoA 9-desaturase activity"/>
    <property type="evidence" value="ECO:0000314"/>
    <property type="project" value="UniProtKB"/>
</dbReference>
<dbReference type="GO" id="GO:0006636">
    <property type="term" value="P:unsaturated fatty acid biosynthetic process"/>
    <property type="evidence" value="ECO:0000314"/>
    <property type="project" value="UniProtKB"/>
</dbReference>
<dbReference type="CDD" id="cd03505">
    <property type="entry name" value="Delta9-FADS-like"/>
    <property type="match status" value="1"/>
</dbReference>
<dbReference type="InterPro" id="IPR015876">
    <property type="entry name" value="Acyl-CoA_DS"/>
</dbReference>
<dbReference type="InterPro" id="IPR005804">
    <property type="entry name" value="FA_desaturase_dom"/>
</dbReference>
<dbReference type="InterPro" id="IPR001522">
    <property type="entry name" value="FADS-1_CS"/>
</dbReference>
<dbReference type="PANTHER" id="PTHR11351">
    <property type="entry name" value="ACYL-COA DESATURASE"/>
    <property type="match status" value="1"/>
</dbReference>
<dbReference type="PANTHER" id="PTHR11351:SF100">
    <property type="entry name" value="STEAROYL-COA DESATURASE 5"/>
    <property type="match status" value="1"/>
</dbReference>
<dbReference type="Pfam" id="PF00487">
    <property type="entry name" value="FA_desaturase"/>
    <property type="match status" value="1"/>
</dbReference>
<dbReference type="PRINTS" id="PR00075">
    <property type="entry name" value="FACDDSATRASE"/>
</dbReference>
<dbReference type="PROSITE" id="PS00476">
    <property type="entry name" value="FATTY_ACID_DESATUR_1"/>
    <property type="match status" value="1"/>
</dbReference>
<proteinExistence type="evidence at protein level"/>
<protein>
    <recommendedName>
        <fullName evidence="13">Stearoyl-CoA desaturase 5</fullName>
        <ecNumber evidence="5 6 7">1.14.19.1</ecNumber>
    </recommendedName>
    <alternativeName>
        <fullName evidence="9">Acyl-CoA-desaturase 4</fullName>
    </alternativeName>
    <alternativeName>
        <fullName evidence="12">HSCD5</fullName>
    </alternativeName>
    <alternativeName>
        <fullName evidence="12">Stearoyl-CoA 9-desaturase</fullName>
    </alternativeName>
    <alternativeName>
        <fullName evidence="11">Stearoyl-CoA desaturase 2</fullName>
    </alternativeName>
</protein>
<organism>
    <name type="scientific">Homo sapiens</name>
    <name type="common">Human</name>
    <dbReference type="NCBI Taxonomy" id="9606"/>
    <lineage>
        <taxon>Eukaryota</taxon>
        <taxon>Metazoa</taxon>
        <taxon>Chordata</taxon>
        <taxon>Craniata</taxon>
        <taxon>Vertebrata</taxon>
        <taxon>Euteleostomi</taxon>
        <taxon>Mammalia</taxon>
        <taxon>Eutheria</taxon>
        <taxon>Euarchontoglires</taxon>
        <taxon>Primates</taxon>
        <taxon>Haplorrhini</taxon>
        <taxon>Catarrhini</taxon>
        <taxon>Hominidae</taxon>
        <taxon>Homo</taxon>
    </lineage>
</organism>
<sequence>MPGPATDAGKIPFCDAKEEIRAGLESSEGGGGPERPGARGQRQNIVWRNVVLMSLLHLGAVYSLVLIPKAKPLTLLWAYFCFLLAALGVTAGAHRLWSHRSYRAKLPLRIFLAVANSMAFQNDIFEWSRDHRAHHKYSETDADPHNARRGFFFSHIGWLFVRKHRDVIEKGRKLDVTDLLADPVVRIQRKYYKISVVLMCFVVPTLVPWYIWGESLWNSYFLASILRYTISLNISWLVNSAAHMYGNRPYDKHISPRQNPLVALGAIGEGFHNYHHTFPFDYSASEFGLNFNPTTWFIDFMCWLGLATDRKRATKPMIEARKARTGDSSA</sequence>
<gene>
    <name type="primary">SCD5</name>
    <name evidence="9" type="synonym">ACOD4</name>
    <name evidence="11" type="synonym">SCD2</name>
    <name type="synonym">SCD4</name>
</gene>
<evidence type="ECO:0000250" key="1">
    <source>
        <dbReference type="UniProtKB" id="O00767"/>
    </source>
</evidence>
<evidence type="ECO:0000250" key="2">
    <source>
        <dbReference type="UniProtKB" id="P13516"/>
    </source>
</evidence>
<evidence type="ECO:0000255" key="3"/>
<evidence type="ECO:0000269" key="4">
    <source>
    </source>
</evidence>
<evidence type="ECO:0000269" key="5">
    <source>
    </source>
</evidence>
<evidence type="ECO:0000269" key="6">
    <source>
    </source>
</evidence>
<evidence type="ECO:0000269" key="7">
    <source>
    </source>
</evidence>
<evidence type="ECO:0000269" key="8">
    <source>
    </source>
</evidence>
<evidence type="ECO:0000303" key="9">
    <source>
    </source>
</evidence>
<evidence type="ECO:0000303" key="10">
    <source>
    </source>
</evidence>
<evidence type="ECO:0000303" key="11">
    <source>
    </source>
</evidence>
<evidence type="ECO:0000303" key="12">
    <source>
    </source>
</evidence>
<evidence type="ECO:0000303" key="13">
    <source>
    </source>
</evidence>
<evidence type="ECO:0000305" key="14"/>
<accession>Q86SK9</accession>
<accession>B2RPG0</accession>
<accession>Q4W5Q5</accession>
<accession>Q8NDS0</accession>
<accession>Q9H7D1</accession>
<comment type="function">
    <text evidence="5 6 7">Stearoyl-CoA desaturase that utilizes O(2) and electrons from reduced cytochrome b5 to introduce the first double bond into saturated fatty acyl-CoA substrates. Catalyzes the insertion of a cis double bond at the delta-9 position into fatty acyl-CoA substrates including palmitoyl-CoA and stearoyl-CoA (PubMed:15610069, PubMed:15907797, PubMed:22745828). Gives rise to a mixture of 16:1 and 18:1 unsaturated fatty acids (PubMed:15610069, PubMed:15907797). Involved in neuronal cell proliferation and differentiation through down-regulation of EGFR/AKT/MAPK and Wnt signaling pathways (PubMed:22745828).</text>
</comment>
<comment type="catalytic activity">
    <reaction evidence="5 6">
        <text>octadecanoyl-CoA + 2 Fe(II)-[cytochrome b5] + O2 + 2 H(+) = (9Z)-octadecenoyl-CoA + 2 Fe(III)-[cytochrome b5] + 2 H2O</text>
        <dbReference type="Rhea" id="RHEA:19721"/>
        <dbReference type="Rhea" id="RHEA-COMP:10438"/>
        <dbReference type="Rhea" id="RHEA-COMP:10439"/>
        <dbReference type="ChEBI" id="CHEBI:15377"/>
        <dbReference type="ChEBI" id="CHEBI:15378"/>
        <dbReference type="ChEBI" id="CHEBI:15379"/>
        <dbReference type="ChEBI" id="CHEBI:29033"/>
        <dbReference type="ChEBI" id="CHEBI:29034"/>
        <dbReference type="ChEBI" id="CHEBI:57387"/>
        <dbReference type="ChEBI" id="CHEBI:57394"/>
        <dbReference type="EC" id="1.14.19.1"/>
    </reaction>
</comment>
<comment type="catalytic activity">
    <reaction evidence="5 7">
        <text>hexadecanoyl-CoA + 2 Fe(II)-[cytochrome b5] + O2 + 2 H(+) = (9Z)-hexadecenoyl-CoA + 2 Fe(III)-[cytochrome b5] + 2 H2O</text>
        <dbReference type="Rhea" id="RHEA:36931"/>
        <dbReference type="Rhea" id="RHEA-COMP:10438"/>
        <dbReference type="Rhea" id="RHEA-COMP:10439"/>
        <dbReference type="ChEBI" id="CHEBI:15377"/>
        <dbReference type="ChEBI" id="CHEBI:15378"/>
        <dbReference type="ChEBI" id="CHEBI:15379"/>
        <dbReference type="ChEBI" id="CHEBI:29033"/>
        <dbReference type="ChEBI" id="CHEBI:29034"/>
        <dbReference type="ChEBI" id="CHEBI:57379"/>
        <dbReference type="ChEBI" id="CHEBI:61540"/>
    </reaction>
</comment>
<comment type="cofactor">
    <cofactor evidence="2">
        <name>Fe(2+)</name>
        <dbReference type="ChEBI" id="CHEBI:29033"/>
    </cofactor>
    <text evidence="2">Expected to bind 2 Fe(2+) ions per subunit.</text>
</comment>
<comment type="subunit">
    <text evidence="5">May self-associate and form homodimers.</text>
</comment>
<comment type="subcellular location">
    <subcellularLocation>
        <location evidence="6 7">Endoplasmic reticulum membrane</location>
        <topology evidence="3">Multi-pass membrane protein</topology>
    </subcellularLocation>
</comment>
<comment type="alternative products">
    <event type="alternative splicing"/>
    <isoform>
        <id>Q86SK9-1</id>
        <name>1</name>
        <sequence type="displayed"/>
    </isoform>
    <isoform>
        <id>Q86SK9-2</id>
        <name>2</name>
        <sequence type="described" ref="VSP_029883"/>
    </isoform>
</comment>
<comment type="tissue specificity">
    <text evidence="4 5 6 7 8">Detected in fetal brain, and at lower levels in fetal kidney. Detected in adult brain and pancreas, and at lower levels in kidney and lung. Expressed in spiral ganglion cells and the organ of Corti of fetal cochlea (PubMed:31972369).</text>
</comment>
<comment type="domain">
    <text evidence="1">The histidine box domains are involved in binding the catalytic metal ions.</text>
</comment>
<comment type="disease" evidence="8">
    <disease id="DI-05958">
        <name>Deafness, autosomal dominant, 79</name>
        <acronym>DFNA79</acronym>
        <description>A form of non-syndromic, progressive sensorineural hearing loss. Sensorineural hearing loss results from damage to the neural receptors of the inner ear, the nerve pathways to the brain, or the area of the brain that receives sound information. DFNA79 affected females appear to have milder hearing loss than males.</description>
        <dbReference type="MIM" id="619086"/>
    </disease>
    <text>The disease may be caused by variants affecting the gene represented in this entry.</text>
</comment>
<comment type="miscellaneous">
    <text evidence="14">This protein has no ortholog in rodents.</text>
</comment>
<comment type="similarity">
    <text evidence="14">Belongs to the fatty acid desaturase type 1 family.</text>
</comment>
<name>SCD5_HUMAN</name>
<feature type="chain" id="PRO_0000312653" description="Stearoyl-CoA desaturase 5">
    <location>
        <begin position="1"/>
        <end position="330"/>
    </location>
</feature>
<feature type="topological domain" description="Cytoplasmic" evidence="14">
    <location>
        <begin position="1"/>
        <end position="49"/>
    </location>
</feature>
<feature type="transmembrane region" description="Helical" evidence="3">
    <location>
        <begin position="50"/>
        <end position="70"/>
    </location>
</feature>
<feature type="topological domain" description="Lumenal" evidence="14">
    <location>
        <begin position="71"/>
        <end position="72"/>
    </location>
</feature>
<feature type="transmembrane region" description="Helical" evidence="3">
    <location>
        <begin position="73"/>
        <end position="93"/>
    </location>
</feature>
<feature type="topological domain" description="Cytoplasmic" evidence="14">
    <location>
        <begin position="94"/>
        <end position="193"/>
    </location>
</feature>
<feature type="transmembrane region" description="Helical" evidence="3">
    <location>
        <begin position="194"/>
        <end position="214"/>
    </location>
</feature>
<feature type="topological domain" description="Lumenal" evidence="14">
    <location>
        <position position="215"/>
    </location>
</feature>
<feature type="transmembrane region" description="Helical" evidence="3">
    <location>
        <begin position="216"/>
        <end position="238"/>
    </location>
</feature>
<feature type="topological domain" description="Cytoplasmic" evidence="14">
    <location>
        <begin position="239"/>
        <end position="330"/>
    </location>
</feature>
<feature type="short sequence motif" description="Histidine box-1" evidence="14">
    <location>
        <begin position="94"/>
        <end position="99"/>
    </location>
</feature>
<feature type="short sequence motif" description="Histidine box-2" evidence="14">
    <location>
        <begin position="131"/>
        <end position="135"/>
    </location>
</feature>
<feature type="short sequence motif" description="Histidine box-3" evidence="14">
    <location>
        <begin position="272"/>
        <end position="276"/>
    </location>
</feature>
<feature type="binding site" evidence="1">
    <location>
        <position position="49"/>
    </location>
    <ligand>
        <name>substrate</name>
    </ligand>
</feature>
<feature type="binding site" evidence="2">
    <location>
        <position position="94"/>
    </location>
    <ligand>
        <name>Fe cation</name>
        <dbReference type="ChEBI" id="CHEBI:24875"/>
        <label>1</label>
    </ligand>
</feature>
<feature type="binding site" evidence="2">
    <location>
        <position position="99"/>
    </location>
    <ligand>
        <name>Fe cation</name>
        <dbReference type="ChEBI" id="CHEBI:24875"/>
        <label>1</label>
    </ligand>
</feature>
<feature type="binding site" evidence="1">
    <location>
        <position position="122"/>
    </location>
    <ligand>
        <name>substrate</name>
    </ligand>
</feature>
<feature type="binding site" evidence="1">
    <location>
        <position position="129"/>
    </location>
    <ligand>
        <name>substrate</name>
    </ligand>
</feature>
<feature type="binding site" evidence="1">
    <location>
        <position position="130"/>
    </location>
    <ligand>
        <name>substrate</name>
    </ligand>
</feature>
<feature type="binding site" evidence="2">
    <location>
        <position position="131"/>
    </location>
    <ligand>
        <name>Fe cation</name>
        <dbReference type="ChEBI" id="CHEBI:24875"/>
        <label>1</label>
    </ligand>
</feature>
<feature type="binding site" evidence="2">
    <location>
        <position position="134"/>
    </location>
    <ligand>
        <name>Fe cation</name>
        <dbReference type="ChEBI" id="CHEBI:24875"/>
        <label>2</label>
    </ligand>
</feature>
<feature type="binding site" evidence="2">
    <location>
        <position position="135"/>
    </location>
    <ligand>
        <name>Fe cation</name>
        <dbReference type="ChEBI" id="CHEBI:24875"/>
        <label>1</label>
    </ligand>
</feature>
<feature type="binding site" evidence="1">
    <location>
        <position position="162"/>
    </location>
    <ligand>
        <name>substrate</name>
    </ligand>
</feature>
<feature type="binding site" evidence="1">
    <location>
        <position position="163"/>
    </location>
    <ligand>
        <name>substrate</name>
    </ligand>
</feature>
<feature type="binding site" evidence="1">
    <location>
        <position position="236"/>
    </location>
    <ligand>
        <name>substrate</name>
    </ligand>
</feature>
<feature type="binding site" evidence="2">
    <location>
        <position position="243"/>
    </location>
    <ligand>
        <name>Fe cation</name>
        <dbReference type="ChEBI" id="CHEBI:24875"/>
        <label>2</label>
    </ligand>
</feature>
<feature type="binding site" evidence="2">
    <location>
        <position position="272"/>
    </location>
    <ligand>
        <name>Fe cation</name>
        <dbReference type="ChEBI" id="CHEBI:24875"/>
        <label>2</label>
    </ligand>
</feature>
<feature type="binding site" evidence="2">
    <location>
        <position position="275"/>
    </location>
    <ligand>
        <name>Fe cation</name>
        <dbReference type="ChEBI" id="CHEBI:24875"/>
        <label>1</label>
    </ligand>
</feature>
<feature type="binding site" evidence="2">
    <location>
        <position position="276"/>
    </location>
    <ligand>
        <name>Fe cation</name>
        <dbReference type="ChEBI" id="CHEBI:24875"/>
        <label>2</label>
    </ligand>
</feature>
<feature type="splice variant" id="VSP_029883" description="In isoform 2." evidence="10">
    <original>KYYKISVVLMCFVVPTLVPWYIWGESLWNSYFLASILRYTISLNISWLVNSAAHMYGNRPYDKHISPRQNPLVALGAIGEGFHNYHHTFPFDYSASEFGLNFNPTTWFIDFMCWLGLATDRKRATKPMIEARKARTGDSSA</original>
    <variation>NTQHIQKEGRALNQEAACEMLREWHQGHILKVTLPGLHILALLHTHCNHSEKCCLMLRALSVSLEVF</variation>
    <location>
        <begin position="190"/>
        <end position="330"/>
    </location>
</feature>
<feature type="sequence variant" id="VAR_085092" description="In DFNA79; uncertain significance; dbSNP:rs192654796." evidence="8">
    <original>W</original>
    <variation>S</variation>
    <location>
        <position position="209"/>
    </location>
</feature>
<feature type="sequence conflict" description="In Ref. 2; BAB14961." evidence="14" ref="2">
    <original>F</original>
    <variation>L</variation>
    <location>
        <position position="82"/>
    </location>
</feature>
<feature type="sequence conflict" description="In Ref. 1; AAP31443 and 2; BAB14961." evidence="14" ref="1 2">
    <original>W</original>
    <variation>R</variation>
    <location>
        <position position="127"/>
    </location>
</feature>